<organism>
    <name type="scientific">Homo sapiens</name>
    <name type="common">Human</name>
    <dbReference type="NCBI Taxonomy" id="9606"/>
    <lineage>
        <taxon>Eukaryota</taxon>
        <taxon>Metazoa</taxon>
        <taxon>Chordata</taxon>
        <taxon>Craniata</taxon>
        <taxon>Vertebrata</taxon>
        <taxon>Euteleostomi</taxon>
        <taxon>Mammalia</taxon>
        <taxon>Eutheria</taxon>
        <taxon>Euarchontoglires</taxon>
        <taxon>Primates</taxon>
        <taxon>Haplorrhini</taxon>
        <taxon>Catarrhini</taxon>
        <taxon>Hominidae</taxon>
        <taxon>Homo</taxon>
    </lineage>
</organism>
<feature type="chain" id="PRO_0000082507" description="Ubiquitin-conjugating enzyme E2 S">
    <location>
        <begin position="1"/>
        <end position="222"/>
    </location>
</feature>
<feature type="domain" description="UBC core" evidence="1">
    <location>
        <begin position="11"/>
        <end position="157"/>
    </location>
</feature>
<feature type="region of interest" description="Disordered" evidence="3">
    <location>
        <begin position="156"/>
        <end position="222"/>
    </location>
</feature>
<feature type="compositionally biased region" description="Basic residues" evidence="3">
    <location>
        <begin position="208"/>
        <end position="222"/>
    </location>
</feature>
<feature type="active site" description="Glycyl thioester intermediate" evidence="1">
    <location>
        <position position="95"/>
    </location>
</feature>
<feature type="modified residue" description="N-acetylmethionine" evidence="17">
    <location>
        <position position="1"/>
    </location>
</feature>
<feature type="modified residue" description="Phosphoserine" evidence="18">
    <location>
        <position position="173"/>
    </location>
</feature>
<feature type="mutagenesis site" description="Loss of function." evidence="6 8">
    <original>C</original>
    <variation>S</variation>
    <location>
        <position position="95"/>
    </location>
</feature>
<feature type="mutagenesis site" description="Reduced ubiquitination activity." evidence="10">
    <original>K</original>
    <variation>A</variation>
    <location>
        <position position="117"/>
    </location>
</feature>
<feature type="mutagenesis site" description="Impairs polyubiquitination in the presence of APC/C complex, decreasing affinity for substrate." evidence="11">
    <original>L</original>
    <variation>A</variation>
    <location>
        <position position="222"/>
    </location>
</feature>
<feature type="sequence conflict" description="In Ref. 1; AAA58446." evidence="13" ref="1">
    <original>K</original>
    <variation>KRAL</variation>
    <location>
        <position position="216"/>
    </location>
</feature>
<feature type="helix" evidence="19">
    <location>
        <begin position="10"/>
        <end position="25"/>
    </location>
</feature>
<feature type="strand" evidence="19">
    <location>
        <begin position="31"/>
        <end position="34"/>
    </location>
</feature>
<feature type="turn" evidence="20">
    <location>
        <begin position="38"/>
        <end position="41"/>
    </location>
</feature>
<feature type="strand" evidence="19">
    <location>
        <begin position="42"/>
        <end position="48"/>
    </location>
</feature>
<feature type="turn" evidence="19">
    <location>
        <begin position="54"/>
        <end position="57"/>
    </location>
</feature>
<feature type="strand" evidence="19">
    <location>
        <begin position="59"/>
        <end position="65"/>
    </location>
</feature>
<feature type="turn" evidence="19">
    <location>
        <begin position="68"/>
        <end position="72"/>
    </location>
</feature>
<feature type="strand" evidence="19">
    <location>
        <begin position="76"/>
        <end position="81"/>
    </location>
</feature>
<feature type="strand" evidence="19">
    <location>
        <begin position="92"/>
        <end position="94"/>
    </location>
</feature>
<feature type="helix" evidence="19">
    <location>
        <begin position="96"/>
        <end position="100"/>
    </location>
</feature>
<feature type="helix" evidence="19">
    <location>
        <begin position="109"/>
        <end position="121"/>
    </location>
</feature>
<feature type="helix" evidence="19">
    <location>
        <begin position="125"/>
        <end position="127"/>
    </location>
</feature>
<feature type="helix" evidence="19">
    <location>
        <begin position="131"/>
        <end position="139"/>
    </location>
</feature>
<feature type="helix" evidence="19">
    <location>
        <begin position="141"/>
        <end position="155"/>
    </location>
</feature>
<feature type="helix" evidence="21">
    <location>
        <begin position="206"/>
        <end position="217"/>
    </location>
</feature>
<feature type="helix" evidence="21">
    <location>
        <begin position="218"/>
        <end position="220"/>
    </location>
</feature>
<reference key="1">
    <citation type="journal article" date="1992" name="J. Biol. Chem.">
        <title>cDNA cloning of a novel human ubiquitin carrier protein. An antigenic domain specifically recognized by endemic pemphigus foliaceus autoantibodies is encoded in a secondary reading frame of this human epidermal transcript.</title>
        <authorList>
            <person name="Liu Z."/>
            <person name="Diaz L.A."/>
            <person name="Haas A.L."/>
            <person name="Giudice G.J."/>
        </authorList>
    </citation>
    <scope>NUCLEOTIDE SEQUENCE [MRNA]</scope>
    <source>
        <tissue>Foreskin</tissue>
    </source>
</reference>
<reference key="2">
    <citation type="submission" date="2001-05" db="EMBL/GenBank/DDBJ databases">
        <title>Identification of immuno-peptidmics that are recognized by tumor-reactive CTL generated from TIL of colon cancer patients.</title>
        <authorList>
            <person name="Shichijo S."/>
            <person name="Itoh K."/>
        </authorList>
    </citation>
    <scope>NUCLEOTIDE SEQUENCE [LARGE SCALE MRNA]</scope>
    <source>
        <tissue>Colon adenocarcinoma</tissue>
    </source>
</reference>
<reference key="3">
    <citation type="journal article" date="2004" name="Nature">
        <title>The DNA sequence and biology of human chromosome 19.</title>
        <authorList>
            <person name="Grimwood J."/>
            <person name="Gordon L.A."/>
            <person name="Olsen A.S."/>
            <person name="Terry A."/>
            <person name="Schmutz J."/>
            <person name="Lamerdin J.E."/>
            <person name="Hellsten U."/>
            <person name="Goodstein D."/>
            <person name="Couronne O."/>
            <person name="Tran-Gyamfi M."/>
            <person name="Aerts A."/>
            <person name="Altherr M."/>
            <person name="Ashworth L."/>
            <person name="Bajorek E."/>
            <person name="Black S."/>
            <person name="Branscomb E."/>
            <person name="Caenepeel S."/>
            <person name="Carrano A.V."/>
            <person name="Caoile C."/>
            <person name="Chan Y.M."/>
            <person name="Christensen M."/>
            <person name="Cleland C.A."/>
            <person name="Copeland A."/>
            <person name="Dalin E."/>
            <person name="Dehal P."/>
            <person name="Denys M."/>
            <person name="Detter J.C."/>
            <person name="Escobar J."/>
            <person name="Flowers D."/>
            <person name="Fotopulos D."/>
            <person name="Garcia C."/>
            <person name="Georgescu A.M."/>
            <person name="Glavina T."/>
            <person name="Gomez M."/>
            <person name="Gonzales E."/>
            <person name="Groza M."/>
            <person name="Hammon N."/>
            <person name="Hawkins T."/>
            <person name="Haydu L."/>
            <person name="Ho I."/>
            <person name="Huang W."/>
            <person name="Israni S."/>
            <person name="Jett J."/>
            <person name="Kadner K."/>
            <person name="Kimball H."/>
            <person name="Kobayashi A."/>
            <person name="Larionov V."/>
            <person name="Leem S.-H."/>
            <person name="Lopez F."/>
            <person name="Lou Y."/>
            <person name="Lowry S."/>
            <person name="Malfatti S."/>
            <person name="Martinez D."/>
            <person name="McCready P.M."/>
            <person name="Medina C."/>
            <person name="Morgan J."/>
            <person name="Nelson K."/>
            <person name="Nolan M."/>
            <person name="Ovcharenko I."/>
            <person name="Pitluck S."/>
            <person name="Pollard M."/>
            <person name="Popkie A.P."/>
            <person name="Predki P."/>
            <person name="Quan G."/>
            <person name="Ramirez L."/>
            <person name="Rash S."/>
            <person name="Retterer J."/>
            <person name="Rodriguez A."/>
            <person name="Rogers S."/>
            <person name="Salamov A."/>
            <person name="Salazar A."/>
            <person name="She X."/>
            <person name="Smith D."/>
            <person name="Slezak T."/>
            <person name="Solovyev V."/>
            <person name="Thayer N."/>
            <person name="Tice H."/>
            <person name="Tsai M."/>
            <person name="Ustaszewska A."/>
            <person name="Vo N."/>
            <person name="Wagner M."/>
            <person name="Wheeler J."/>
            <person name="Wu K."/>
            <person name="Xie G."/>
            <person name="Yang J."/>
            <person name="Dubchak I."/>
            <person name="Furey T.S."/>
            <person name="DeJong P."/>
            <person name="Dickson M."/>
            <person name="Gordon D."/>
            <person name="Eichler E.E."/>
            <person name="Pennacchio L.A."/>
            <person name="Richardson P."/>
            <person name="Stubbs L."/>
            <person name="Rokhsar D.S."/>
            <person name="Myers R.M."/>
            <person name="Rubin E.M."/>
            <person name="Lucas S.M."/>
        </authorList>
    </citation>
    <scope>NUCLEOTIDE SEQUENCE [LARGE SCALE GENOMIC DNA]</scope>
</reference>
<reference key="4">
    <citation type="journal article" date="2004" name="Genome Res.">
        <title>The status, quality, and expansion of the NIH full-length cDNA project: the Mammalian Gene Collection (MGC).</title>
        <authorList>
            <consortium name="The MGC Project Team"/>
        </authorList>
    </citation>
    <scope>NUCLEOTIDE SEQUENCE [LARGE SCALE MRNA]</scope>
    <source>
        <tissue>Colon</tissue>
        <tissue>Skin</tissue>
    </source>
</reference>
<reference key="5">
    <citation type="journal article" date="2006" name="Nat. Med.">
        <title>E2-EPF UCP targets pVHL for degradation and associates with tumor growth and metastasis.</title>
        <authorList>
            <person name="Jung C.R."/>
            <person name="Hwang K.S."/>
            <person name="Yoo J."/>
            <person name="Cho W.K."/>
            <person name="Kim J.M."/>
            <person name="Kim W.H."/>
            <person name="Im D.S."/>
        </authorList>
    </citation>
    <scope>FUNCTION</scope>
    <scope>INTERACTION WITH VHL</scope>
</reference>
<reference key="6">
    <citation type="journal article" date="2008" name="Proc. Natl. Acad. Sci. U.S.A.">
        <title>A quantitative atlas of mitotic phosphorylation.</title>
        <authorList>
            <person name="Dephoure N."/>
            <person name="Zhou C."/>
            <person name="Villen J."/>
            <person name="Beausoleil S.A."/>
            <person name="Bakalarski C.E."/>
            <person name="Elledge S.J."/>
            <person name="Gygi S.P."/>
        </authorList>
    </citation>
    <scope>IDENTIFICATION BY MASS SPECTROMETRY [LARGE SCALE ANALYSIS]</scope>
    <source>
        <tissue>Cervix carcinoma</tissue>
    </source>
</reference>
<reference key="7">
    <citation type="journal article" date="2009" name="Anal. Chem.">
        <title>Lys-N and trypsin cover complementary parts of the phosphoproteome in a refined SCX-based approach.</title>
        <authorList>
            <person name="Gauci S."/>
            <person name="Helbig A.O."/>
            <person name="Slijper M."/>
            <person name="Krijgsveld J."/>
            <person name="Heck A.J."/>
            <person name="Mohammed S."/>
        </authorList>
    </citation>
    <scope>ACETYLATION [LARGE SCALE ANALYSIS] AT MET-1</scope>
    <scope>IDENTIFICATION BY MASS SPECTROMETRY [LARGE SCALE ANALYSIS]</scope>
</reference>
<reference key="8">
    <citation type="journal article" date="2009" name="Nat. Cell Biol.">
        <title>UBE2S elongates ubiquitin chains on APC/C substrates to promote mitotic exit.</title>
        <authorList>
            <person name="Garnett M.J."/>
            <person name="Mansfeld J."/>
            <person name="Godwin C."/>
            <person name="Matsusaka T."/>
            <person name="Wu J."/>
            <person name="Russell P."/>
            <person name="Pines J."/>
            <person name="Venkitaraman A.R."/>
        </authorList>
    </citation>
    <scope>FUNCTION</scope>
    <scope>CATALYTIC ACTIVITY</scope>
    <scope>PATHWAY</scope>
</reference>
<reference key="9">
    <citation type="journal article" date="2009" name="Proc. Natl. Acad. Sci. U.S.A.">
        <title>Identification of a physiological E2 module for the human anaphase-promoting complex.</title>
        <authorList>
            <person name="Williamson A."/>
            <person name="Wickliffe K.E."/>
            <person name="Mellone B.G."/>
            <person name="Song L."/>
            <person name="Karpen G.H."/>
            <person name="Rape M."/>
        </authorList>
    </citation>
    <scope>FUNCTION</scope>
    <scope>CATALYTIC ACTIVITY</scope>
    <scope>PATHWAY</scope>
    <scope>INTERACTION WITH CDC20 AND FZR</scope>
    <scope>UBIQUITINATION</scope>
    <scope>MUTAGENESIS OF CYS-95</scope>
</reference>
<reference key="10">
    <citation type="journal article" date="2010" name="J. Biol. Chem.">
        <title>The E2 ubiquitin-conjugating enzymes direct polyubiquitination to preferred lysines.</title>
        <authorList>
            <person name="David Y."/>
            <person name="Ziv T."/>
            <person name="Admon A."/>
            <person name="Navon A."/>
        </authorList>
    </citation>
    <scope>FUNCTION</scope>
    <scope>CATALYTIC ACTIVITY</scope>
</reference>
<reference key="11">
    <citation type="journal article" date="2010" name="Nat. Struct. Mol. Biol.">
        <title>Lys11-linked ubiquitin chains adopt compact conformations and are preferentially hydrolyzed by the deubiquitinase Cezanne.</title>
        <authorList>
            <person name="Bremm A."/>
            <person name="Freund S.M."/>
            <person name="Komander D."/>
        </authorList>
    </citation>
    <scope>FUNCTION</scope>
    <scope>MUTAGENESIS OF CYS-95</scope>
</reference>
<reference key="12">
    <citation type="journal article" date="2011" name="BMC Syst. Biol.">
        <title>Initial characterization of the human central proteome.</title>
        <authorList>
            <person name="Burkard T.R."/>
            <person name="Planyavsky M."/>
            <person name="Kaupe I."/>
            <person name="Breitwieser F.P."/>
            <person name="Buerckstuemmer T."/>
            <person name="Bennett K.L."/>
            <person name="Superti-Furga G."/>
            <person name="Colinge J."/>
        </authorList>
    </citation>
    <scope>IDENTIFICATION BY MASS SPECTROMETRY [LARGE SCALE ANALYSIS]</scope>
</reference>
<reference key="13">
    <citation type="journal article" date="2013" name="J. Proteome Res.">
        <title>Toward a comprehensive characterization of a human cancer cell phosphoproteome.</title>
        <authorList>
            <person name="Zhou H."/>
            <person name="Di Palma S."/>
            <person name="Preisinger C."/>
            <person name="Peng M."/>
            <person name="Polat A.N."/>
            <person name="Heck A.J."/>
            <person name="Mohammed S."/>
        </authorList>
    </citation>
    <scope>PHOSPHORYLATION [LARGE SCALE ANALYSIS] AT SER-173</scope>
    <scope>IDENTIFICATION BY MASS SPECTROMETRY [LARGE SCALE ANALYSIS]</scope>
    <source>
        <tissue>Erythroleukemia</tissue>
    </source>
</reference>
<reference key="14">
    <citation type="journal article" date="2016" name="Sci. Rep.">
        <title>SAG/RBX2 E3 ligase complexes with UBCH10 and UBE2S E2s to ubiquitylate beta-TrCP1 via K11-linkage for degradation.</title>
        <authorList>
            <person name="Kuang P."/>
            <person name="Tan M."/>
            <person name="Zhou W."/>
            <person name="Zhang Q."/>
            <person name="Sun Y."/>
        </authorList>
    </citation>
    <scope>FUNCTION</scope>
    <scope>CATALYTIC ACTIVITY</scope>
    <scope>PATHWAY</scope>
</reference>
<reference key="15">
    <citation type="submission" date="2009-02" db="PDB data bank">
        <title>Crystal structure of human ubiquitin-conjugating enzyme E2S.</title>
        <authorList>
            <consortium name="Structural genomics consortium (SGC)"/>
        </authorList>
    </citation>
    <scope>X-RAY CRYSTALLOGRAPHY (1.93 ANGSTROMS) OF 1-156</scope>
</reference>
<reference evidence="14" key="16">
    <citation type="journal article" date="2012" name="Mol. Cell. Proteomics">
        <title>A human ubiquitin conjugating enzyme (E2)-HECT E3 ligase structure-function screen.</title>
        <authorList>
            <person name="Sheng Y."/>
            <person name="Hong J.H."/>
            <person name="Doherty R."/>
            <person name="Srikumar T."/>
            <person name="Shloush J."/>
            <person name="Avvakumov G.V."/>
            <person name="Walker J.R."/>
            <person name="Xue S."/>
            <person name="Neculai D."/>
            <person name="Wan J.W."/>
            <person name="Kim S.K."/>
            <person name="Arrowsmith C.H."/>
            <person name="Raught B."/>
            <person name="Dhe-Paganon S."/>
        </authorList>
    </citation>
    <scope>X-RAY CRYSTALLOGRAPHY (1.93 ANGSTROMS) OF 1-156</scope>
    <scope>FUNCTION</scope>
    <scope>AUTOUBIQUITINATION</scope>
</reference>
<reference evidence="16" key="17">
    <citation type="journal article" date="2016" name="Cell">
        <title>Dual RING E3 architectures regulate multiubiquitination and ubiquitin chain elongation by APC/C.</title>
        <authorList>
            <person name="Brown N.G."/>
            <person name="VanderLinden R."/>
            <person name="Watson E.R."/>
            <person name="Weissmann F."/>
            <person name="Ordureau A."/>
            <person name="Wu K.P."/>
            <person name="Zhang W."/>
            <person name="Yu S."/>
            <person name="Mercredi P.Y."/>
            <person name="Harrison J.S."/>
            <person name="Davidson I.F."/>
            <person name="Qiao R."/>
            <person name="Lu Y."/>
            <person name="Dube P."/>
            <person name="Brunner M.R."/>
            <person name="Grace C.R."/>
            <person name="Miller D.J."/>
            <person name="Haselbach D."/>
            <person name="Jarvis M.A."/>
            <person name="Yamaguchi M."/>
            <person name="Yanishevski D."/>
            <person name="Petzold G."/>
            <person name="Sidhu S.S."/>
            <person name="Kuhlman B."/>
            <person name="Kirschner M.W."/>
            <person name="Harper J.W."/>
            <person name="Peters J.M."/>
            <person name="Stark H."/>
            <person name="Schulman B.A."/>
        </authorList>
    </citation>
    <scope>STRUCTURE BY ELECTRON MICROSCOPY (6.40 ANGSTROMS) IN COMPLEX WITH APC/C</scope>
    <scope>FUNCTION</scope>
    <scope>INTERACTION WITH ANAPC2 AND ANAPC4</scope>
    <scope>MUTAGENESIS OF LEU-222</scope>
</reference>
<reference evidence="15" key="18">
    <citation type="journal article" date="2016" name="PLoS ONE">
        <title>Crystal structure of a Ube2S-ubiquitin conjugate.</title>
        <authorList>
            <person name="Lorenz S."/>
            <person name="Bhattacharyya M."/>
            <person name="Feiler C."/>
            <person name="Rape M."/>
            <person name="Kuriyan J."/>
        </authorList>
    </citation>
    <scope>X-RAY CRYSTALLOGRAPHY (2.49 ANGSTROMS) OF 1-156 IN COMPLEX WITH UBIQUITIN</scope>
    <scope>MUTAGENESIS OF LYS-117</scope>
</reference>
<accession>Q16763</accession>
<accession>Q9BTC1</accession>
<name>UBE2S_HUMAN</name>
<keyword id="KW-0002">3D-structure</keyword>
<keyword id="KW-0007">Acetylation</keyword>
<keyword id="KW-0067">ATP-binding</keyword>
<keyword id="KW-0131">Cell cycle</keyword>
<keyword id="KW-0132">Cell division</keyword>
<keyword id="KW-0547">Nucleotide-binding</keyword>
<keyword id="KW-0597">Phosphoprotein</keyword>
<keyword id="KW-1267">Proteomics identification</keyword>
<keyword id="KW-1185">Reference proteome</keyword>
<keyword id="KW-0808">Transferase</keyword>
<keyword id="KW-0832">Ubl conjugation</keyword>
<keyword id="KW-0833">Ubl conjugation pathway</keyword>
<evidence type="ECO:0000255" key="1">
    <source>
        <dbReference type="PROSITE-ProRule" id="PRU00388"/>
    </source>
</evidence>
<evidence type="ECO:0000255" key="2">
    <source>
        <dbReference type="PROSITE-ProRule" id="PRU10133"/>
    </source>
</evidence>
<evidence type="ECO:0000256" key="3">
    <source>
        <dbReference type="SAM" id="MobiDB-lite"/>
    </source>
</evidence>
<evidence type="ECO:0000269" key="4">
    <source>
    </source>
</evidence>
<evidence type="ECO:0000269" key="5">
    <source>
    </source>
</evidence>
<evidence type="ECO:0000269" key="6">
    <source>
    </source>
</evidence>
<evidence type="ECO:0000269" key="7">
    <source>
    </source>
</evidence>
<evidence type="ECO:0000269" key="8">
    <source>
    </source>
</evidence>
<evidence type="ECO:0000269" key="9">
    <source>
    </source>
</evidence>
<evidence type="ECO:0000269" key="10">
    <source>
    </source>
</evidence>
<evidence type="ECO:0000269" key="11">
    <source>
    </source>
</evidence>
<evidence type="ECO:0000269" key="12">
    <source>
    </source>
</evidence>
<evidence type="ECO:0000305" key="13"/>
<evidence type="ECO:0007744" key="14">
    <source>
        <dbReference type="PDB" id="1ZDN"/>
    </source>
</evidence>
<evidence type="ECO:0007744" key="15">
    <source>
        <dbReference type="PDB" id="5BNB"/>
    </source>
</evidence>
<evidence type="ECO:0007744" key="16">
    <source>
        <dbReference type="PDB" id="5L9T"/>
    </source>
</evidence>
<evidence type="ECO:0007744" key="17">
    <source>
    </source>
</evidence>
<evidence type="ECO:0007744" key="18">
    <source>
    </source>
</evidence>
<evidence type="ECO:0007829" key="19">
    <source>
        <dbReference type="PDB" id="6S98"/>
    </source>
</evidence>
<evidence type="ECO:0007829" key="20">
    <source>
        <dbReference type="PDB" id="7AHF"/>
    </source>
</evidence>
<evidence type="ECO:0007829" key="21">
    <source>
        <dbReference type="PDB" id="8TAU"/>
    </source>
</evidence>
<comment type="function">
    <text evidence="4 5 6 7 8 9 11 12">Accepts ubiquitin from the E1 complex and catalyzes its covalent attachment to other proteins (PubMed:19820702, PubMed:19822757, PubMed:22496338, PubMed:27259151). Catalyzes 'Lys-11'-linked polyubiquitination. Acts as an essential factor of the anaphase promoting complex/cyclosome (APC/C), a cell cycle-regulated ubiquitin ligase that controls progression through mitosis (PubMed:19820702, PubMed:19822757, PubMed:27259151, PubMed:27910872). Acts by specifically elongating 'Lys-11'-linked polyubiquitin chains initiated by the E2 enzyme UBE2C/UBCH10 on APC/C substrates, enhancing the degradation of APC/C substrates by the proteasome and promoting mitotic exit (PubMed:19820702, PubMed:19822757, PubMed:27259151). Also acts by elongating ubiquitin chains initiated by the E2 enzyme UBE2D1/UBCH5 in vitro; it is however unclear whether UBE2D1/UBCH5 acts as an E2 enzyme for the APC/C in vivo. Also involved in ubiquitination and subsequent degradation of VHL, resulting in an accumulation of HIF1A (PubMed:16819549). In vitro able to promote polyubiquitination using all 7 ubiquitin Lys residues, except 'Lys-48'-linked polyubiquitination (PubMed:20061386, PubMed:20622874).</text>
</comment>
<comment type="catalytic activity">
    <reaction evidence="1 2 5 6 7 12">
        <text>S-ubiquitinyl-[E1 ubiquitin-activating enzyme]-L-cysteine + [E2 ubiquitin-conjugating enzyme]-L-cysteine = [E1 ubiquitin-activating enzyme]-L-cysteine + S-ubiquitinyl-[E2 ubiquitin-conjugating enzyme]-L-cysteine.</text>
        <dbReference type="EC" id="2.3.2.23"/>
    </reaction>
</comment>
<comment type="pathway">
    <text evidence="1 5 6 12">Protein modification; protein ubiquitination.</text>
</comment>
<comment type="subunit">
    <text evidence="4 6 11">Component of the APC/C complex, composed of at least 14 distinct subunits that assemble into a complex of at least 19 chains with a combined molecular mass of around 1.2 MDa. Within this complex, directly interacts with ANAPC2 and ANAPC4 (PubMed:27259151). Interacts with CDC20, FZR1/CDH1 and VHL (PubMed:16819549, PubMed:19822757).</text>
</comment>
<comment type="interaction">
    <interactant intactId="EBI-2339823">
        <id>Q16763</id>
    </interactant>
    <interactant intactId="EBI-396211">
        <id>Q9UJX6</id>
        <label>ANAPC2</label>
    </interactant>
    <organismsDiffer>false</organismsDiffer>
    <experiments>4</experiments>
</comment>
<comment type="interaction">
    <interactant intactId="EBI-2339823">
        <id>Q16763</id>
    </interactant>
    <interactant intactId="EBI-356942">
        <id>P62879</id>
        <label>GNB2</label>
    </interactant>
    <organismsDiffer>false</organismsDiffer>
    <experiments>3</experiments>
</comment>
<comment type="interaction">
    <interactant intactId="EBI-2339823">
        <id>Q16763</id>
    </interactant>
    <interactant intactId="EBI-12157263">
        <id>P40337-2</id>
        <label>VHL</label>
    </interactant>
    <organismsDiffer>false</organismsDiffer>
    <experiments>3</experiments>
</comment>
<comment type="PTM">
    <text evidence="6">Autoubiquitinated by the APC/C complex during G1, leading to its degradation by the proteasome.</text>
</comment>
<comment type="similarity">
    <text evidence="1">Belongs to the ubiquitin-conjugating enzyme family.</text>
</comment>
<dbReference type="EC" id="2.3.2.23" evidence="5 6 7 12"/>
<dbReference type="EMBL" id="M91670">
    <property type="protein sequence ID" value="AAA58446.1"/>
    <property type="molecule type" value="mRNA"/>
</dbReference>
<dbReference type="EMBL" id="AB062397">
    <property type="protein sequence ID" value="BAB93484.1"/>
    <property type="molecule type" value="mRNA"/>
</dbReference>
<dbReference type="EMBL" id="AC020922">
    <property type="status" value="NOT_ANNOTATED_CDS"/>
    <property type="molecule type" value="Genomic_DNA"/>
</dbReference>
<dbReference type="EMBL" id="BC004236">
    <property type="protein sequence ID" value="AAH04236.1"/>
    <property type="molecule type" value="mRNA"/>
</dbReference>
<dbReference type="EMBL" id="BC007554">
    <property type="protein sequence ID" value="AAH07554.1"/>
    <property type="molecule type" value="mRNA"/>
</dbReference>
<dbReference type="EMBL" id="BC065364">
    <property type="protein sequence ID" value="AAH65364.1"/>
    <property type="molecule type" value="mRNA"/>
</dbReference>
<dbReference type="CCDS" id="CCDS33114.1"/>
<dbReference type="RefSeq" id="NP_055316.2">
    <property type="nucleotide sequence ID" value="NM_014501.3"/>
</dbReference>
<dbReference type="PDB" id="1ZDN">
    <property type="method" value="X-ray"/>
    <property type="resolution" value="1.93 A"/>
    <property type="chains" value="A/B=1-156"/>
</dbReference>
<dbReference type="PDB" id="5BNB">
    <property type="method" value="X-ray"/>
    <property type="resolution" value="2.49 A"/>
    <property type="chains" value="A/B/C/D=1-156"/>
</dbReference>
<dbReference type="PDB" id="5L9T">
    <property type="method" value="EM"/>
    <property type="resolution" value="6.40 A"/>
    <property type="chains" value="T=1-222"/>
</dbReference>
<dbReference type="PDB" id="6QH3">
    <property type="method" value="X-ray"/>
    <property type="resolution" value="2.90 A"/>
    <property type="chains" value="A/B=1-156"/>
</dbReference>
<dbReference type="PDB" id="6QHK">
    <property type="method" value="X-ray"/>
    <property type="resolution" value="1.96 A"/>
    <property type="chains" value="A/B=1-156"/>
</dbReference>
<dbReference type="PDB" id="6S96">
    <property type="method" value="X-ray"/>
    <property type="resolution" value="2.18 A"/>
    <property type="chains" value="A/B=1-156"/>
</dbReference>
<dbReference type="PDB" id="6S98">
    <property type="method" value="X-ray"/>
    <property type="resolution" value="1.55 A"/>
    <property type="chains" value="A/B=1-156"/>
</dbReference>
<dbReference type="PDB" id="7AHF">
    <property type="method" value="X-ray"/>
    <property type="resolution" value="2.15 A"/>
    <property type="chains" value="A/B=1-156"/>
</dbReference>
<dbReference type="PDB" id="8TAU">
    <property type="method" value="EM"/>
    <property type="resolution" value="3.50 A"/>
    <property type="chains" value="E=205-222"/>
</dbReference>
<dbReference type="PDBsum" id="1ZDN"/>
<dbReference type="PDBsum" id="5BNB"/>
<dbReference type="PDBsum" id="5L9T"/>
<dbReference type="PDBsum" id="6QH3"/>
<dbReference type="PDBsum" id="6QHK"/>
<dbReference type="PDBsum" id="6S96"/>
<dbReference type="PDBsum" id="6S98"/>
<dbReference type="PDBsum" id="7AHF"/>
<dbReference type="PDBsum" id="8TAU"/>
<dbReference type="BMRB" id="Q16763"/>
<dbReference type="EMDB" id="EMD-41142"/>
<dbReference type="SMR" id="Q16763"/>
<dbReference type="BioGRID" id="118150">
    <property type="interactions" value="157"/>
</dbReference>
<dbReference type="DIP" id="DIP-52784N"/>
<dbReference type="FunCoup" id="Q16763">
    <property type="interactions" value="3840"/>
</dbReference>
<dbReference type="IntAct" id="Q16763">
    <property type="interactions" value="34"/>
</dbReference>
<dbReference type="MINT" id="Q16763"/>
<dbReference type="STRING" id="9606.ENSP00000264552"/>
<dbReference type="GlyGen" id="Q16763">
    <property type="glycosylation" value="1 site"/>
</dbReference>
<dbReference type="iPTMnet" id="Q16763"/>
<dbReference type="MetOSite" id="Q16763"/>
<dbReference type="PhosphoSitePlus" id="Q16763"/>
<dbReference type="SwissPalm" id="Q16763"/>
<dbReference type="BioMuta" id="UBE2S"/>
<dbReference type="DMDM" id="23829978"/>
<dbReference type="jPOST" id="Q16763"/>
<dbReference type="MassIVE" id="Q16763"/>
<dbReference type="PaxDb" id="9606-ENSP00000264552"/>
<dbReference type="PeptideAtlas" id="Q16763"/>
<dbReference type="ProteomicsDB" id="61055"/>
<dbReference type="Pumba" id="Q16763"/>
<dbReference type="Antibodypedia" id="33096">
    <property type="antibodies" value="568 antibodies from 32 providers"/>
</dbReference>
<dbReference type="DNASU" id="27338"/>
<dbReference type="Ensembl" id="ENST00000264552.14">
    <property type="protein sequence ID" value="ENSP00000264552.8"/>
    <property type="gene ID" value="ENSG00000108106.14"/>
</dbReference>
<dbReference type="GeneID" id="27338"/>
<dbReference type="KEGG" id="hsa:27338"/>
<dbReference type="MANE-Select" id="ENST00000264552.14">
    <property type="protein sequence ID" value="ENSP00000264552.8"/>
    <property type="RefSeq nucleotide sequence ID" value="NM_014501.3"/>
    <property type="RefSeq protein sequence ID" value="NP_055316.2"/>
</dbReference>
<dbReference type="UCSC" id="uc002qkx.2">
    <property type="organism name" value="human"/>
</dbReference>
<dbReference type="AGR" id="HGNC:17895"/>
<dbReference type="CTD" id="27338"/>
<dbReference type="DisGeNET" id="27338"/>
<dbReference type="GeneCards" id="UBE2S"/>
<dbReference type="HGNC" id="HGNC:17895">
    <property type="gene designation" value="UBE2S"/>
</dbReference>
<dbReference type="HPA" id="ENSG00000108106">
    <property type="expression patterns" value="Tissue enhanced (bone marrow, testis)"/>
</dbReference>
<dbReference type="MIM" id="610309">
    <property type="type" value="gene"/>
</dbReference>
<dbReference type="neXtProt" id="NX_Q16763"/>
<dbReference type="OpenTargets" id="ENSG00000108106"/>
<dbReference type="PharmGKB" id="PA134904441"/>
<dbReference type="VEuPathDB" id="HostDB:ENSG00000108106"/>
<dbReference type="eggNOG" id="KOG0423">
    <property type="taxonomic scope" value="Eukaryota"/>
</dbReference>
<dbReference type="GeneTree" id="ENSGT00940000157149"/>
<dbReference type="InParanoid" id="Q16763"/>
<dbReference type="OMA" id="QPAKCGA"/>
<dbReference type="OrthoDB" id="10069349at2759"/>
<dbReference type="PAN-GO" id="Q16763">
    <property type="GO annotations" value="4 GO annotations based on evolutionary models"/>
</dbReference>
<dbReference type="PhylomeDB" id="Q16763"/>
<dbReference type="TreeFam" id="TF101120"/>
<dbReference type="BRENDA" id="2.3.2.23">
    <property type="organism ID" value="2681"/>
</dbReference>
<dbReference type="BRENDA" id="2.3.2.24">
    <property type="organism ID" value="2681"/>
</dbReference>
<dbReference type="PathwayCommons" id="Q16763"/>
<dbReference type="Reactome" id="R-HSA-141430">
    <property type="pathway name" value="Inactivation of APC/C via direct inhibition of the APC/C complex"/>
</dbReference>
<dbReference type="Reactome" id="R-HSA-174048">
    <property type="pathway name" value="APC/C:Cdc20 mediated degradation of Cyclin B"/>
</dbReference>
<dbReference type="Reactome" id="R-HSA-174084">
    <property type="pathway name" value="Autodegradation of Cdh1 by Cdh1:APC/C"/>
</dbReference>
<dbReference type="Reactome" id="R-HSA-174154">
    <property type="pathway name" value="APC/C:Cdc20 mediated degradation of Securin"/>
</dbReference>
<dbReference type="Reactome" id="R-HSA-174178">
    <property type="pathway name" value="APC/C:Cdh1 mediated degradation of Cdc20 and other APC/C:Cdh1 targeted proteins in late mitosis/early G1"/>
</dbReference>
<dbReference type="Reactome" id="R-HSA-174184">
    <property type="pathway name" value="Cdc20:Phospho-APC/C mediated degradation of Cyclin A"/>
</dbReference>
<dbReference type="Reactome" id="R-HSA-176407">
    <property type="pathway name" value="Conversion from APC/C:Cdc20 to APC/C:Cdh1 in late anaphase"/>
</dbReference>
<dbReference type="Reactome" id="R-HSA-176408">
    <property type="pathway name" value="Regulation of APC/C activators between G1/S and early anaphase"/>
</dbReference>
<dbReference type="Reactome" id="R-HSA-176409">
    <property type="pathway name" value="APC/C:Cdc20 mediated degradation of mitotic proteins"/>
</dbReference>
<dbReference type="Reactome" id="R-HSA-176412">
    <property type="pathway name" value="Phosphorylation of the APC/C"/>
</dbReference>
<dbReference type="Reactome" id="R-HSA-179409">
    <property type="pathway name" value="APC-Cdc20 mediated degradation of Nek2A"/>
</dbReference>
<dbReference type="Reactome" id="R-HSA-2467813">
    <property type="pathway name" value="Separation of Sister Chromatids"/>
</dbReference>
<dbReference type="Reactome" id="R-HSA-2559582">
    <property type="pathway name" value="Senescence-Associated Secretory Phenotype (SASP)"/>
</dbReference>
<dbReference type="Reactome" id="R-HSA-68867">
    <property type="pathway name" value="Assembly of the pre-replicative complex"/>
</dbReference>
<dbReference type="Reactome" id="R-HSA-69017">
    <property type="pathway name" value="CDK-mediated phosphorylation and removal of Cdc6"/>
</dbReference>
<dbReference type="Reactome" id="R-HSA-8853884">
    <property type="pathway name" value="Transcriptional Regulation by VENTX"/>
</dbReference>
<dbReference type="Reactome" id="R-HSA-8866652">
    <property type="pathway name" value="Synthesis of active ubiquitin: roles of E1 and E2 enzymes"/>
</dbReference>
<dbReference type="Reactome" id="R-HSA-9687136">
    <property type="pathway name" value="Aberrant regulation of mitotic exit in cancer due to RB1 defects"/>
</dbReference>
<dbReference type="Reactome" id="R-HSA-983168">
    <property type="pathway name" value="Antigen processing: Ubiquitination &amp; Proteasome degradation"/>
</dbReference>
<dbReference type="SignaLink" id="Q16763"/>
<dbReference type="SIGNOR" id="Q16763"/>
<dbReference type="UniPathway" id="UPA00143"/>
<dbReference type="BioGRID-ORCS" id="27338">
    <property type="hits" value="283 hits in 1136 CRISPR screens"/>
</dbReference>
<dbReference type="ChiTaRS" id="UBE2S">
    <property type="organism name" value="human"/>
</dbReference>
<dbReference type="EvolutionaryTrace" id="Q16763"/>
<dbReference type="GenomeRNAi" id="27338"/>
<dbReference type="Pharos" id="Q16763">
    <property type="development level" value="Tbio"/>
</dbReference>
<dbReference type="PRO" id="PR:Q16763"/>
<dbReference type="Proteomes" id="UP000005640">
    <property type="component" value="Chromosome 19"/>
</dbReference>
<dbReference type="RNAct" id="Q16763">
    <property type="molecule type" value="protein"/>
</dbReference>
<dbReference type="Bgee" id="ENSG00000108106">
    <property type="expression patterns" value="Expressed in ventricular zone and 100 other cell types or tissues"/>
</dbReference>
<dbReference type="ExpressionAtlas" id="Q16763">
    <property type="expression patterns" value="baseline and differential"/>
</dbReference>
<dbReference type="GO" id="GO:0005680">
    <property type="term" value="C:anaphase-promoting complex"/>
    <property type="evidence" value="ECO:0000314"/>
    <property type="project" value="UniProtKB"/>
</dbReference>
<dbReference type="GO" id="GO:0005829">
    <property type="term" value="C:cytosol"/>
    <property type="evidence" value="ECO:0000304"/>
    <property type="project" value="Reactome"/>
</dbReference>
<dbReference type="GO" id="GO:0005654">
    <property type="term" value="C:nucleoplasm"/>
    <property type="evidence" value="ECO:0000304"/>
    <property type="project" value="Reactome"/>
</dbReference>
<dbReference type="GO" id="GO:0005634">
    <property type="term" value="C:nucleus"/>
    <property type="evidence" value="ECO:0000318"/>
    <property type="project" value="GO_Central"/>
</dbReference>
<dbReference type="GO" id="GO:0010997">
    <property type="term" value="F:anaphase-promoting complex binding"/>
    <property type="evidence" value="ECO:0000353"/>
    <property type="project" value="UniProtKB"/>
</dbReference>
<dbReference type="GO" id="GO:0005524">
    <property type="term" value="F:ATP binding"/>
    <property type="evidence" value="ECO:0007669"/>
    <property type="project" value="UniProtKB-KW"/>
</dbReference>
<dbReference type="GO" id="GO:0061631">
    <property type="term" value="F:ubiquitin conjugating enzyme activity"/>
    <property type="evidence" value="ECO:0000314"/>
    <property type="project" value="UniProtKB"/>
</dbReference>
<dbReference type="GO" id="GO:0004842">
    <property type="term" value="F:ubiquitin-protein transferase activity"/>
    <property type="evidence" value="ECO:0000314"/>
    <property type="project" value="UniProtKB"/>
</dbReference>
<dbReference type="GO" id="GO:0031145">
    <property type="term" value="P:anaphase-promoting complex-dependent catabolic process"/>
    <property type="evidence" value="ECO:0000314"/>
    <property type="project" value="UniProtKB"/>
</dbReference>
<dbReference type="GO" id="GO:0051301">
    <property type="term" value="P:cell division"/>
    <property type="evidence" value="ECO:0007669"/>
    <property type="project" value="UniProtKB-KW"/>
</dbReference>
<dbReference type="GO" id="GO:0010458">
    <property type="term" value="P:exit from mitosis"/>
    <property type="evidence" value="ECO:0000314"/>
    <property type="project" value="UniProtKB"/>
</dbReference>
<dbReference type="GO" id="GO:0010994">
    <property type="term" value="P:free ubiquitin chain polymerization"/>
    <property type="evidence" value="ECO:0000314"/>
    <property type="project" value="UniProtKB"/>
</dbReference>
<dbReference type="GO" id="GO:1904668">
    <property type="term" value="P:positive regulation of ubiquitin protein ligase activity"/>
    <property type="evidence" value="ECO:0000314"/>
    <property type="project" value="UniProtKB"/>
</dbReference>
<dbReference type="GO" id="GO:0043161">
    <property type="term" value="P:proteasome-mediated ubiquitin-dependent protein catabolic process"/>
    <property type="evidence" value="ECO:0000314"/>
    <property type="project" value="UniProt"/>
</dbReference>
<dbReference type="GO" id="GO:0070979">
    <property type="term" value="P:protein K11-linked ubiquitination"/>
    <property type="evidence" value="ECO:0000314"/>
    <property type="project" value="UniProtKB"/>
</dbReference>
<dbReference type="GO" id="GO:0044314">
    <property type="term" value="P:protein K27-linked ubiquitination"/>
    <property type="evidence" value="ECO:0000314"/>
    <property type="project" value="UniProtKB"/>
</dbReference>
<dbReference type="GO" id="GO:0035519">
    <property type="term" value="P:protein K29-linked ubiquitination"/>
    <property type="evidence" value="ECO:0000314"/>
    <property type="project" value="UniProtKB"/>
</dbReference>
<dbReference type="GO" id="GO:0085020">
    <property type="term" value="P:protein K6-linked ubiquitination"/>
    <property type="evidence" value="ECO:0000314"/>
    <property type="project" value="UniProtKB"/>
</dbReference>
<dbReference type="GO" id="GO:0070534">
    <property type="term" value="P:protein K63-linked ubiquitination"/>
    <property type="evidence" value="ECO:0000314"/>
    <property type="project" value="UniProtKB"/>
</dbReference>
<dbReference type="GO" id="GO:0036211">
    <property type="term" value="P:protein modification process"/>
    <property type="evidence" value="ECO:0000304"/>
    <property type="project" value="ProtInc"/>
</dbReference>
<dbReference type="GO" id="GO:0000209">
    <property type="term" value="P:protein polyubiquitination"/>
    <property type="evidence" value="ECO:0000318"/>
    <property type="project" value="GO_Central"/>
</dbReference>
<dbReference type="GO" id="GO:0006511">
    <property type="term" value="P:ubiquitin-dependent protein catabolic process"/>
    <property type="evidence" value="ECO:0000318"/>
    <property type="project" value="GO_Central"/>
</dbReference>
<dbReference type="CDD" id="cd23804">
    <property type="entry name" value="UBCc_UBE2S"/>
    <property type="match status" value="1"/>
</dbReference>
<dbReference type="FunFam" id="3.10.110.10:FF:000034">
    <property type="entry name" value="Ubiquitin-conjugating enzyme E2 S"/>
    <property type="match status" value="1"/>
</dbReference>
<dbReference type="Gene3D" id="3.10.110.10">
    <property type="entry name" value="Ubiquitin Conjugating Enzyme"/>
    <property type="match status" value="1"/>
</dbReference>
<dbReference type="InterPro" id="IPR050113">
    <property type="entry name" value="Ub_conjugating_enzyme"/>
</dbReference>
<dbReference type="InterPro" id="IPR000608">
    <property type="entry name" value="UBQ-conjugat_E2_core"/>
</dbReference>
<dbReference type="InterPro" id="IPR023313">
    <property type="entry name" value="UBQ-conjugating_AS"/>
</dbReference>
<dbReference type="InterPro" id="IPR016135">
    <property type="entry name" value="UBQ-conjugating_enzyme/RWD"/>
</dbReference>
<dbReference type="PANTHER" id="PTHR24067">
    <property type="entry name" value="UBIQUITIN-CONJUGATING ENZYME E2"/>
    <property type="match status" value="1"/>
</dbReference>
<dbReference type="Pfam" id="PF00179">
    <property type="entry name" value="UQ_con"/>
    <property type="match status" value="1"/>
</dbReference>
<dbReference type="SMART" id="SM00212">
    <property type="entry name" value="UBCc"/>
    <property type="match status" value="1"/>
</dbReference>
<dbReference type="SUPFAM" id="SSF54495">
    <property type="entry name" value="UBC-like"/>
    <property type="match status" value="1"/>
</dbReference>
<dbReference type="PROSITE" id="PS00183">
    <property type="entry name" value="UBC_1"/>
    <property type="match status" value="1"/>
</dbReference>
<dbReference type="PROSITE" id="PS50127">
    <property type="entry name" value="UBC_2"/>
    <property type="match status" value="1"/>
</dbReference>
<gene>
    <name type="primary">UBE2S</name>
    <name type="synonym">E2EPF</name>
    <name type="ORF">OK/SW-cl.73</name>
</gene>
<protein>
    <recommendedName>
        <fullName>Ubiquitin-conjugating enzyme E2 S</fullName>
        <ecNumber evidence="5 6 7 12">2.3.2.23</ecNumber>
    </recommendedName>
    <alternativeName>
        <fullName>E2 ubiquitin-conjugating enzyme S</fullName>
    </alternativeName>
    <alternativeName>
        <fullName>E2-EPF</fullName>
    </alternativeName>
    <alternativeName>
        <fullName>Ubiquitin carrier protein S</fullName>
    </alternativeName>
    <alternativeName>
        <fullName>Ubiquitin-conjugating enzyme E2-24 kDa</fullName>
    </alternativeName>
    <alternativeName>
        <fullName>Ubiquitin-conjugating enzyme E2-EPF5</fullName>
    </alternativeName>
    <alternativeName>
        <fullName>Ubiquitin-protein ligase S</fullName>
    </alternativeName>
</protein>
<sequence length="222" mass="23845">MNSNVENLPPHIIRLVYKEVTTLTADPPDGIKVFPNEEDLTDLQVTIEGPEGTPYAGGLFRMKLLLGKDFPASPPKGYFLTKIFHPNVGANGEICVNVLKRDWTAELGIRHVLLTIKCLLIHPNPESALNEEAGRLLLENYEEYAARARLLTEIHGGAGGPSGRAEAGRALASGTEASSTDPGAPGGPGGAEGPMAKKHAGERDKKLAAKKKTDKKRALRRL</sequence>
<proteinExistence type="evidence at protein level"/>